<gene>
    <name evidence="1" type="primary">pstB</name>
    <name type="ordered locus">SAB1242c</name>
</gene>
<protein>
    <recommendedName>
        <fullName evidence="1">Phosphate import ATP-binding protein PstB</fullName>
        <ecNumber evidence="1">7.3.2.1</ecNumber>
    </recommendedName>
    <alternativeName>
        <fullName evidence="1">ABC phosphate transporter</fullName>
    </alternativeName>
    <alternativeName>
        <fullName evidence="1">Phosphate-transporting ATPase</fullName>
    </alternativeName>
</protein>
<feature type="chain" id="PRO_0000272533" description="Phosphate import ATP-binding protein PstB">
    <location>
        <begin position="1"/>
        <end position="283"/>
    </location>
</feature>
<feature type="domain" description="ABC transporter" evidence="1">
    <location>
        <begin position="37"/>
        <end position="278"/>
    </location>
</feature>
<feature type="region of interest" description="Disordered" evidence="2">
    <location>
        <begin position="1"/>
        <end position="33"/>
    </location>
</feature>
<feature type="compositionally biased region" description="Polar residues" evidence="2">
    <location>
        <begin position="1"/>
        <end position="20"/>
    </location>
</feature>
<feature type="binding site" evidence="1">
    <location>
        <begin position="69"/>
        <end position="76"/>
    </location>
    <ligand>
        <name>ATP</name>
        <dbReference type="ChEBI" id="CHEBI:30616"/>
    </ligand>
</feature>
<reference key="1">
    <citation type="journal article" date="2007" name="PLoS ONE">
        <title>Molecular correlates of host specialization in Staphylococcus aureus.</title>
        <authorList>
            <person name="Herron-Olson L."/>
            <person name="Fitzgerald J.R."/>
            <person name="Musser J.M."/>
            <person name="Kapur V."/>
        </authorList>
    </citation>
    <scope>NUCLEOTIDE SEQUENCE [LARGE SCALE GENOMIC DNA]</scope>
    <source>
        <strain>bovine RF122 / ET3-1</strain>
    </source>
</reference>
<comment type="function">
    <text evidence="1">Part of the ABC transporter complex PstSACB involved in phosphate import. Responsible for energy coupling to the transport system.</text>
</comment>
<comment type="catalytic activity">
    <reaction evidence="1">
        <text>phosphate(out) + ATP + H2O = ADP + 2 phosphate(in) + H(+)</text>
        <dbReference type="Rhea" id="RHEA:24440"/>
        <dbReference type="ChEBI" id="CHEBI:15377"/>
        <dbReference type="ChEBI" id="CHEBI:15378"/>
        <dbReference type="ChEBI" id="CHEBI:30616"/>
        <dbReference type="ChEBI" id="CHEBI:43474"/>
        <dbReference type="ChEBI" id="CHEBI:456216"/>
        <dbReference type="EC" id="7.3.2.1"/>
    </reaction>
</comment>
<comment type="subunit">
    <text evidence="1">The complex is composed of two ATP-binding proteins (PstB), two transmembrane proteins (PstC and PstA) and a solute-binding protein (PstS).</text>
</comment>
<comment type="subcellular location">
    <subcellularLocation>
        <location evidence="1">Cell membrane</location>
        <topology evidence="1">Peripheral membrane protein</topology>
    </subcellularLocation>
</comment>
<comment type="similarity">
    <text evidence="1">Belongs to the ABC transporter superfamily. Phosphate importer (TC 3.A.1.7) family.</text>
</comment>
<name>PSTB_STAAB</name>
<proteinExistence type="inferred from homology"/>
<organism>
    <name type="scientific">Staphylococcus aureus (strain bovine RF122 / ET3-1)</name>
    <dbReference type="NCBI Taxonomy" id="273036"/>
    <lineage>
        <taxon>Bacteria</taxon>
        <taxon>Bacillati</taxon>
        <taxon>Bacillota</taxon>
        <taxon>Bacilli</taxon>
        <taxon>Bacillales</taxon>
        <taxon>Staphylococcaceae</taxon>
        <taxon>Staphylococcus</taxon>
    </lineage>
</organism>
<evidence type="ECO:0000255" key="1">
    <source>
        <dbReference type="HAMAP-Rule" id="MF_01702"/>
    </source>
</evidence>
<evidence type="ECO:0000256" key="2">
    <source>
        <dbReference type="SAM" id="MobiDB-lite"/>
    </source>
</evidence>
<dbReference type="EC" id="7.3.2.1" evidence="1"/>
<dbReference type="EMBL" id="AJ938182">
    <property type="protein sequence ID" value="CAI80931.1"/>
    <property type="molecule type" value="Genomic_DNA"/>
</dbReference>
<dbReference type="RefSeq" id="WP_000079452.1">
    <property type="nucleotide sequence ID" value="NC_007622.1"/>
</dbReference>
<dbReference type="SMR" id="Q2YXY2"/>
<dbReference type="KEGG" id="sab:SAB1242c"/>
<dbReference type="HOGENOM" id="CLU_000604_1_22_9"/>
<dbReference type="GO" id="GO:0005886">
    <property type="term" value="C:plasma membrane"/>
    <property type="evidence" value="ECO:0007669"/>
    <property type="project" value="UniProtKB-SubCell"/>
</dbReference>
<dbReference type="GO" id="GO:0005524">
    <property type="term" value="F:ATP binding"/>
    <property type="evidence" value="ECO:0007669"/>
    <property type="project" value="UniProtKB-KW"/>
</dbReference>
<dbReference type="GO" id="GO:0016887">
    <property type="term" value="F:ATP hydrolysis activity"/>
    <property type="evidence" value="ECO:0007669"/>
    <property type="project" value="InterPro"/>
</dbReference>
<dbReference type="GO" id="GO:0015415">
    <property type="term" value="F:ATPase-coupled phosphate ion transmembrane transporter activity"/>
    <property type="evidence" value="ECO:0007669"/>
    <property type="project" value="UniProtKB-EC"/>
</dbReference>
<dbReference type="GO" id="GO:0035435">
    <property type="term" value="P:phosphate ion transmembrane transport"/>
    <property type="evidence" value="ECO:0007669"/>
    <property type="project" value="InterPro"/>
</dbReference>
<dbReference type="CDD" id="cd03260">
    <property type="entry name" value="ABC_PstB_phosphate_transporter"/>
    <property type="match status" value="1"/>
</dbReference>
<dbReference type="Gene3D" id="3.40.50.300">
    <property type="entry name" value="P-loop containing nucleotide triphosphate hydrolases"/>
    <property type="match status" value="1"/>
</dbReference>
<dbReference type="InterPro" id="IPR003593">
    <property type="entry name" value="AAA+_ATPase"/>
</dbReference>
<dbReference type="InterPro" id="IPR003439">
    <property type="entry name" value="ABC_transporter-like_ATP-bd"/>
</dbReference>
<dbReference type="InterPro" id="IPR017871">
    <property type="entry name" value="ABC_transporter-like_CS"/>
</dbReference>
<dbReference type="InterPro" id="IPR027417">
    <property type="entry name" value="P-loop_NTPase"/>
</dbReference>
<dbReference type="InterPro" id="IPR005670">
    <property type="entry name" value="PstB-like"/>
</dbReference>
<dbReference type="NCBIfam" id="TIGR00972">
    <property type="entry name" value="3a0107s01c2"/>
    <property type="match status" value="1"/>
</dbReference>
<dbReference type="PANTHER" id="PTHR43423">
    <property type="entry name" value="ABC TRANSPORTER I FAMILY MEMBER 17"/>
    <property type="match status" value="1"/>
</dbReference>
<dbReference type="PANTHER" id="PTHR43423:SF1">
    <property type="entry name" value="ABC TRANSPORTER I FAMILY MEMBER 17"/>
    <property type="match status" value="1"/>
</dbReference>
<dbReference type="Pfam" id="PF00005">
    <property type="entry name" value="ABC_tran"/>
    <property type="match status" value="1"/>
</dbReference>
<dbReference type="SMART" id="SM00382">
    <property type="entry name" value="AAA"/>
    <property type="match status" value="1"/>
</dbReference>
<dbReference type="SUPFAM" id="SSF52540">
    <property type="entry name" value="P-loop containing nucleoside triphosphate hydrolases"/>
    <property type="match status" value="1"/>
</dbReference>
<dbReference type="PROSITE" id="PS00211">
    <property type="entry name" value="ABC_TRANSPORTER_1"/>
    <property type="match status" value="1"/>
</dbReference>
<dbReference type="PROSITE" id="PS50893">
    <property type="entry name" value="ABC_TRANSPORTER_2"/>
    <property type="match status" value="1"/>
</dbReference>
<dbReference type="PROSITE" id="PS51238">
    <property type="entry name" value="PSTB"/>
    <property type="match status" value="1"/>
</dbReference>
<sequence>MAQTLAQTKQISQSHTFDVSQSHHKTPNDTNSHSVIYSTQNLDLWYGENHALQNINLDIYENQITAIIGPSGCGKSTYIKTLNRMVELVPTVKTAGKILYRDQDIFDQKYSKEQLRTNVGMVFQQPNPFPKSIYDNITYGPKIHGIKNKKVLDEIVEKSLRGAAIWDELKDRLHTNAYSLSGGQQQRVCIARCLAIEPEVILMDEPTSALDPISTLRVEELVQELKEKYTIIMVTHNMQQAARVSDKTAFFLNGYVNEYDDTDKIFSNPSNKKTEDYISGRFG</sequence>
<accession>Q2YXY2</accession>
<keyword id="KW-0067">ATP-binding</keyword>
<keyword id="KW-1003">Cell membrane</keyword>
<keyword id="KW-0472">Membrane</keyword>
<keyword id="KW-0547">Nucleotide-binding</keyword>
<keyword id="KW-0592">Phosphate transport</keyword>
<keyword id="KW-1278">Translocase</keyword>
<keyword id="KW-0813">Transport</keyword>